<keyword id="KW-0067">ATP-binding</keyword>
<keyword id="KW-0963">Cytoplasm</keyword>
<keyword id="KW-0227">DNA damage</keyword>
<keyword id="KW-0234">DNA repair</keyword>
<keyword id="KW-0235">DNA replication</keyword>
<keyword id="KW-0238">DNA-binding</keyword>
<keyword id="KW-0547">Nucleotide-binding</keyword>
<keyword id="KW-1185">Reference proteome</keyword>
<keyword id="KW-0742">SOS response</keyword>
<proteinExistence type="inferred from homology"/>
<reference key="1">
    <citation type="journal article" date="2009" name="J. Bacteriol.">
        <title>Complete genome sequence of Haemophilus parasuis SH0165.</title>
        <authorList>
            <person name="Yue M."/>
            <person name="Yang F."/>
            <person name="Yang J."/>
            <person name="Bei W."/>
            <person name="Cai X."/>
            <person name="Chen L."/>
            <person name="Dong J."/>
            <person name="Zhou R."/>
            <person name="Jin M."/>
            <person name="Jin Q."/>
            <person name="Chen H."/>
        </authorList>
    </citation>
    <scope>NUCLEOTIDE SEQUENCE [LARGE SCALE GENOMIC DNA]</scope>
    <source>
        <strain>SH0165</strain>
    </source>
</reference>
<accession>B8F744</accession>
<organism>
    <name type="scientific">Glaesserella parasuis serovar 5 (strain SH0165)</name>
    <name type="common">Haemophilus parasuis</name>
    <dbReference type="NCBI Taxonomy" id="557723"/>
    <lineage>
        <taxon>Bacteria</taxon>
        <taxon>Pseudomonadati</taxon>
        <taxon>Pseudomonadota</taxon>
        <taxon>Gammaproteobacteria</taxon>
        <taxon>Pasteurellales</taxon>
        <taxon>Pasteurellaceae</taxon>
        <taxon>Glaesserella</taxon>
    </lineage>
</organism>
<gene>
    <name evidence="1" type="primary">recF</name>
    <name type="ordered locus">HAPS_1595</name>
</gene>
<name>RECF_GLAP5</name>
<sequence length="361" mass="41648">MSLSRLIINNFRNLTAVDLELNHGFNFFIGANGSGKTSLLEAIFYLGHGKSFKSHISNRIIKYNQEEFTLFGKIQEEKHECSVGLQKNRQGETILRINGESNKKIADLAYLLPMQVITPEGLTLLNGGPIYRRAFLDWGLFHQNTDFYHNWNSLKRLLKQRNAALVQTRHYNELKPWDVELSKFAQIVSQSRAVYVESILTYIEKNCQFFLPELEITATFYQGWEKERDYADLLAQGFERDRSVGYTMVGPQKADFRFRANGLPVEDVLSRGQLKLLMCALRLAQGEYFIAQKNRQCIFLIDDFASELDTQKCELLADRLYQSGSQVFVTAITQEQLKPIQGKRQDNATSFFIKDGKMQFM</sequence>
<feature type="chain" id="PRO_1000133690" description="DNA replication and repair protein RecF">
    <location>
        <begin position="1"/>
        <end position="361"/>
    </location>
</feature>
<feature type="binding site" evidence="1">
    <location>
        <begin position="30"/>
        <end position="37"/>
    </location>
    <ligand>
        <name>ATP</name>
        <dbReference type="ChEBI" id="CHEBI:30616"/>
    </ligand>
</feature>
<evidence type="ECO:0000255" key="1">
    <source>
        <dbReference type="HAMAP-Rule" id="MF_00365"/>
    </source>
</evidence>
<comment type="function">
    <text evidence="1">The RecF protein is involved in DNA metabolism; it is required for DNA replication and normal SOS inducibility. RecF binds preferentially to single-stranded, linear DNA. It also seems to bind ATP.</text>
</comment>
<comment type="subcellular location">
    <subcellularLocation>
        <location evidence="1">Cytoplasm</location>
    </subcellularLocation>
</comment>
<comment type="similarity">
    <text evidence="1">Belongs to the RecF family.</text>
</comment>
<dbReference type="EMBL" id="CP001321">
    <property type="protein sequence ID" value="ACL33146.1"/>
    <property type="molecule type" value="Genomic_DNA"/>
</dbReference>
<dbReference type="RefSeq" id="WP_015939848.1">
    <property type="nucleotide sequence ID" value="NC_011852.1"/>
</dbReference>
<dbReference type="SMR" id="B8F744"/>
<dbReference type="STRING" id="557723.HAPS_1595"/>
<dbReference type="KEGG" id="hap:HAPS_1595"/>
<dbReference type="PATRIC" id="fig|557723.8.peg.1565"/>
<dbReference type="HOGENOM" id="CLU_040267_0_0_6"/>
<dbReference type="Proteomes" id="UP000006743">
    <property type="component" value="Chromosome"/>
</dbReference>
<dbReference type="GO" id="GO:0005737">
    <property type="term" value="C:cytoplasm"/>
    <property type="evidence" value="ECO:0007669"/>
    <property type="project" value="UniProtKB-SubCell"/>
</dbReference>
<dbReference type="GO" id="GO:0005524">
    <property type="term" value="F:ATP binding"/>
    <property type="evidence" value="ECO:0007669"/>
    <property type="project" value="UniProtKB-UniRule"/>
</dbReference>
<dbReference type="GO" id="GO:0003697">
    <property type="term" value="F:single-stranded DNA binding"/>
    <property type="evidence" value="ECO:0007669"/>
    <property type="project" value="UniProtKB-UniRule"/>
</dbReference>
<dbReference type="GO" id="GO:0006260">
    <property type="term" value="P:DNA replication"/>
    <property type="evidence" value="ECO:0007669"/>
    <property type="project" value="UniProtKB-UniRule"/>
</dbReference>
<dbReference type="GO" id="GO:0000731">
    <property type="term" value="P:DNA synthesis involved in DNA repair"/>
    <property type="evidence" value="ECO:0007669"/>
    <property type="project" value="TreeGrafter"/>
</dbReference>
<dbReference type="GO" id="GO:0006302">
    <property type="term" value="P:double-strand break repair"/>
    <property type="evidence" value="ECO:0007669"/>
    <property type="project" value="TreeGrafter"/>
</dbReference>
<dbReference type="GO" id="GO:0009432">
    <property type="term" value="P:SOS response"/>
    <property type="evidence" value="ECO:0007669"/>
    <property type="project" value="UniProtKB-UniRule"/>
</dbReference>
<dbReference type="Gene3D" id="3.40.50.300">
    <property type="entry name" value="P-loop containing nucleotide triphosphate hydrolases"/>
    <property type="match status" value="1"/>
</dbReference>
<dbReference type="Gene3D" id="1.20.1050.90">
    <property type="entry name" value="RecF/RecN/SMC, N-terminal domain"/>
    <property type="match status" value="1"/>
</dbReference>
<dbReference type="HAMAP" id="MF_00365">
    <property type="entry name" value="RecF"/>
    <property type="match status" value="1"/>
</dbReference>
<dbReference type="InterPro" id="IPR001238">
    <property type="entry name" value="DNA-binding_RecF"/>
</dbReference>
<dbReference type="InterPro" id="IPR018078">
    <property type="entry name" value="DNA-binding_RecF_CS"/>
</dbReference>
<dbReference type="InterPro" id="IPR027417">
    <property type="entry name" value="P-loop_NTPase"/>
</dbReference>
<dbReference type="InterPro" id="IPR003395">
    <property type="entry name" value="RecF/RecN/SMC_N"/>
</dbReference>
<dbReference type="InterPro" id="IPR042174">
    <property type="entry name" value="RecF_2"/>
</dbReference>
<dbReference type="NCBIfam" id="TIGR00611">
    <property type="entry name" value="recf"/>
    <property type="match status" value="1"/>
</dbReference>
<dbReference type="PANTHER" id="PTHR32182">
    <property type="entry name" value="DNA REPLICATION AND REPAIR PROTEIN RECF"/>
    <property type="match status" value="1"/>
</dbReference>
<dbReference type="PANTHER" id="PTHR32182:SF0">
    <property type="entry name" value="DNA REPLICATION AND REPAIR PROTEIN RECF"/>
    <property type="match status" value="1"/>
</dbReference>
<dbReference type="Pfam" id="PF02463">
    <property type="entry name" value="SMC_N"/>
    <property type="match status" value="1"/>
</dbReference>
<dbReference type="SUPFAM" id="SSF52540">
    <property type="entry name" value="P-loop containing nucleoside triphosphate hydrolases"/>
    <property type="match status" value="1"/>
</dbReference>
<dbReference type="PROSITE" id="PS00617">
    <property type="entry name" value="RECF_1"/>
    <property type="match status" value="1"/>
</dbReference>
<dbReference type="PROSITE" id="PS00618">
    <property type="entry name" value="RECF_2"/>
    <property type="match status" value="1"/>
</dbReference>
<protein>
    <recommendedName>
        <fullName evidence="1">DNA replication and repair protein RecF</fullName>
    </recommendedName>
</protein>